<name>IFT43_HUMAN</name>
<keyword id="KW-0002">3D-structure</keyword>
<keyword id="KW-0007">Acetylation</keyword>
<keyword id="KW-0025">Alternative splicing</keyword>
<keyword id="KW-0966">Cell projection</keyword>
<keyword id="KW-1186">Ciliopathy</keyword>
<keyword id="KW-0970">Cilium biogenesis/degradation</keyword>
<keyword id="KW-0963">Cytoplasm</keyword>
<keyword id="KW-0206">Cytoskeleton</keyword>
<keyword id="KW-0225">Disease variant</keyword>
<keyword id="KW-0038">Ectodermal dysplasia</keyword>
<keyword id="KW-0597">Phosphoprotein</keyword>
<keyword id="KW-1267">Proteomics identification</keyword>
<keyword id="KW-1185">Reference proteome</keyword>
<keyword id="KW-0682">Retinitis pigmentosa</keyword>
<evidence type="ECO:0000256" key="1">
    <source>
        <dbReference type="SAM" id="MobiDB-lite"/>
    </source>
</evidence>
<evidence type="ECO:0000269" key="2">
    <source>
    </source>
</evidence>
<evidence type="ECO:0000269" key="3">
    <source>
    </source>
</evidence>
<evidence type="ECO:0000269" key="4">
    <source>
    </source>
</evidence>
<evidence type="ECO:0000269" key="5">
    <source>
    </source>
</evidence>
<evidence type="ECO:0000269" key="6">
    <source>
    </source>
</evidence>
<evidence type="ECO:0000269" key="7">
    <source>
    </source>
</evidence>
<evidence type="ECO:0000269" key="8">
    <source>
    </source>
</evidence>
<evidence type="ECO:0000269" key="9">
    <source>
    </source>
</evidence>
<evidence type="ECO:0000303" key="10">
    <source>
    </source>
</evidence>
<evidence type="ECO:0000303" key="11">
    <source>
    </source>
</evidence>
<evidence type="ECO:0000305" key="12"/>
<evidence type="ECO:0000312" key="13">
    <source>
        <dbReference type="HGNC" id="HGNC:29669"/>
    </source>
</evidence>
<evidence type="ECO:0007744" key="14">
    <source>
    </source>
</evidence>
<evidence type="ECO:0007744" key="15">
    <source>
    </source>
</evidence>
<evidence type="ECO:0007744" key="16">
    <source>
    </source>
</evidence>
<evidence type="ECO:0007829" key="17">
    <source>
        <dbReference type="PDB" id="8BBE"/>
    </source>
</evidence>
<feature type="chain" id="PRO_0000254041" description="Intraflagellar transport protein 43 homolog">
    <location>
        <begin position="1"/>
        <end position="208"/>
    </location>
</feature>
<feature type="region of interest" description="Disordered" evidence="1">
    <location>
        <begin position="18"/>
        <end position="65"/>
    </location>
</feature>
<feature type="compositionally biased region" description="Polar residues" evidence="1">
    <location>
        <begin position="28"/>
        <end position="53"/>
    </location>
</feature>
<feature type="modified residue" description="N-acetylmethionine" evidence="15">
    <location>
        <position position="1"/>
    </location>
</feature>
<feature type="modified residue" description="Phosphoserine" evidence="14 16">
    <location>
        <position position="78"/>
    </location>
</feature>
<feature type="splice variant" id="VSP_021169" description="In isoform 2." evidence="11">
    <original>KFRRKASEEIEDFRLRPQSLNGSDYGG</original>
    <variation>NGTQTGKQQLDLNACYHKTHHRDLGLASLEEA</variation>
    <location>
        <begin position="72"/>
        <end position="98"/>
    </location>
</feature>
<feature type="splice variant" id="VSP_047398" description="In isoform 4." evidence="12">
    <original>DFRLRPQSLNGSDYGGDIPIIPDLEEVQEEDFVLQVAAPPSIQIKRVMTYRDLDNDLMKYSAIQTLDGEIDLKLLTKVLAPEHEVREDDVGWDWDHLFTEVSSEVLTEWDPLQTEKEDPAGQARHT</original>
    <variation>EYVSSILILMVSYVDLGQQCSLGGHDLFHLC</variation>
    <location>
        <begin position="83"/>
        <end position="208"/>
    </location>
</feature>
<feature type="splice variant" id="VSP_041319" description="In isoform 3." evidence="10">
    <original>DIPIIPDLEEVQEEDFVLQVAAPPSIQIKRVMTYRDLDNDLMKYSAIQTLDGEIDLKLLTKVLAPEHEVREDDVGWDWDHLFTEVSSEVLTEWDPLQTEKEDPAGQARHT</original>
    <variation>AVPKQANNSWI</variation>
    <location>
        <begin position="99"/>
        <end position="208"/>
    </location>
</feature>
<feature type="sequence variant" id="VAR_080629" description="In RP81; results in cilia shortening; dbSNP:rs140366557." evidence="8">
    <original>E</original>
    <variation>K</variation>
    <location>
        <position position="34"/>
    </location>
</feature>
<feature type="sequence variant" id="VAR_056839" description="In dbSNP:rs2302858.">
    <original>R</original>
    <variation>H</variation>
    <location>
        <position position="85"/>
    </location>
</feature>
<feature type="sequence variant" id="VAR_080630" description="In SRTD18; patient cells show reduced amount of IFT43 protein and do not have cilia; dbSNP:rs1555369050." evidence="7">
    <original>W</original>
    <variation>R</variation>
    <location>
        <position position="174"/>
    </location>
</feature>
<feature type="sequence conflict" description="In Ref. 1; BAG64101." evidence="12" ref="1">
    <original>Y</original>
    <variation>C</variation>
    <location>
        <position position="13"/>
    </location>
</feature>
<feature type="sequence conflict" description="In Ref. 1; BAG64101." evidence="12" ref="1">
    <original>D</original>
    <variation>Y</variation>
    <location>
        <position position="134"/>
    </location>
</feature>
<feature type="helix" evidence="17">
    <location>
        <begin position="132"/>
        <end position="140"/>
    </location>
</feature>
<feature type="helix" evidence="17">
    <location>
        <begin position="143"/>
        <end position="146"/>
    </location>
</feature>
<feature type="turn" evidence="17">
    <location>
        <begin position="149"/>
        <end position="151"/>
    </location>
</feature>
<feature type="helix" evidence="17">
    <location>
        <begin position="155"/>
        <end position="158"/>
    </location>
</feature>
<feature type="helix" evidence="17">
    <location>
        <begin position="164"/>
        <end position="167"/>
    </location>
</feature>
<feature type="helix" evidence="17">
    <location>
        <begin position="176"/>
        <end position="185"/>
    </location>
</feature>
<feature type="sequence variant" id="VAR_082868" description="In dbSNP:rs17783366." evidence="12">
    <original>D</original>
    <variation>N</variation>
    <location sequence="Q96FT9-2">
        <position position="94"/>
    </location>
</feature>
<dbReference type="EMBL" id="AK056735">
    <property type="protein sequence ID" value="BAG51798.1"/>
    <property type="molecule type" value="mRNA"/>
</dbReference>
<dbReference type="EMBL" id="AK302944">
    <property type="protein sequence ID" value="BAG64101.1"/>
    <property type="molecule type" value="mRNA"/>
</dbReference>
<dbReference type="EMBL" id="AF107885">
    <property type="protein sequence ID" value="AAC79728.1"/>
    <property type="molecule type" value="Genomic_DNA"/>
</dbReference>
<dbReference type="EMBL" id="AC008015">
    <property type="protein sequence ID" value="AAF03245.1"/>
    <property type="molecule type" value="Genomic_DNA"/>
</dbReference>
<dbReference type="EMBL" id="BC010436">
    <property type="protein sequence ID" value="AAH10436.1"/>
    <property type="molecule type" value="mRNA"/>
</dbReference>
<dbReference type="CCDS" id="CCDS41973.1">
    <molecule id="Q96FT9-1"/>
</dbReference>
<dbReference type="CCDS" id="CCDS58330.1">
    <molecule id="Q96FT9-4"/>
</dbReference>
<dbReference type="CCDS" id="CCDS9847.1">
    <molecule id="Q96FT9-2"/>
</dbReference>
<dbReference type="RefSeq" id="NP_001096034.1">
    <molecule id="Q96FT9-1"/>
    <property type="nucleotide sequence ID" value="NM_001102564.3"/>
</dbReference>
<dbReference type="RefSeq" id="NP_001242924.1">
    <molecule id="Q96FT9-4"/>
    <property type="nucleotide sequence ID" value="NM_001255995.3"/>
</dbReference>
<dbReference type="RefSeq" id="NP_443105.2">
    <molecule id="Q96FT9-2"/>
    <property type="nucleotide sequence ID" value="NM_052873.3"/>
</dbReference>
<dbReference type="PDB" id="8BBE">
    <property type="method" value="EM"/>
    <property type="resolution" value="3.50 A"/>
    <property type="chains" value="F=1-208"/>
</dbReference>
<dbReference type="PDB" id="8BBG">
    <property type="method" value="EM"/>
    <property type="resolution" value="3.50 A"/>
    <property type="chains" value="F=1-208"/>
</dbReference>
<dbReference type="PDB" id="8FGW">
    <property type="method" value="EM"/>
    <property type="resolution" value="3.70 A"/>
    <property type="chains" value="F=1-208"/>
</dbReference>
<dbReference type="PDBsum" id="8BBE"/>
<dbReference type="PDBsum" id="8BBG"/>
<dbReference type="PDBsum" id="8FGW"/>
<dbReference type="EMDB" id="EMD-15954"/>
<dbReference type="EMDB" id="EMD-29073"/>
<dbReference type="SMR" id="Q96FT9"/>
<dbReference type="BioGRID" id="125202">
    <property type="interactions" value="26"/>
</dbReference>
<dbReference type="ComplexPortal" id="CPX-5021">
    <property type="entry name" value="Intraflagellar transport complex A"/>
</dbReference>
<dbReference type="CORUM" id="Q96FT9"/>
<dbReference type="FunCoup" id="Q96FT9">
    <property type="interactions" value="102"/>
</dbReference>
<dbReference type="IntAct" id="Q96FT9">
    <property type="interactions" value="27"/>
</dbReference>
<dbReference type="STRING" id="9606.ENSP00000238628"/>
<dbReference type="TCDB" id="1.X.1.1.3">
    <property type="family name" value="the intraflagellar transporter-a complex (ift-a) family"/>
</dbReference>
<dbReference type="iPTMnet" id="Q96FT9"/>
<dbReference type="PhosphoSitePlus" id="Q96FT9"/>
<dbReference type="BioMuta" id="IFT43"/>
<dbReference type="DMDM" id="334302894"/>
<dbReference type="jPOST" id="Q96FT9"/>
<dbReference type="MassIVE" id="Q96FT9"/>
<dbReference type="PeptideAtlas" id="Q96FT9"/>
<dbReference type="ProteomicsDB" id="32865"/>
<dbReference type="ProteomicsDB" id="76555">
    <molecule id="Q96FT9-1"/>
</dbReference>
<dbReference type="ProteomicsDB" id="76556">
    <molecule id="Q96FT9-2"/>
</dbReference>
<dbReference type="ProteomicsDB" id="76557">
    <molecule id="Q96FT9-3"/>
</dbReference>
<dbReference type="Pumba" id="Q96FT9"/>
<dbReference type="Antibodypedia" id="191">
    <property type="antibodies" value="88 antibodies from 20 providers"/>
</dbReference>
<dbReference type="DNASU" id="112752"/>
<dbReference type="Ensembl" id="ENST00000238628.10">
    <molecule id="Q96FT9-2"/>
    <property type="protein sequence ID" value="ENSP00000238628.6"/>
    <property type="gene ID" value="ENSG00000119650.13"/>
</dbReference>
<dbReference type="Ensembl" id="ENST00000314067.11">
    <molecule id="Q96FT9-1"/>
    <property type="protein sequence ID" value="ENSP00000324177.6"/>
    <property type="gene ID" value="ENSG00000119650.13"/>
</dbReference>
<dbReference type="Ensembl" id="ENST00000542766.5">
    <molecule id="Q96FT9-1"/>
    <property type="protein sequence ID" value="ENSP00000440064.1"/>
    <property type="gene ID" value="ENSG00000119650.13"/>
</dbReference>
<dbReference type="Ensembl" id="ENST00000556742.1">
    <molecule id="Q96FT9-4"/>
    <property type="protein sequence ID" value="ENSP00000451096.1"/>
    <property type="gene ID" value="ENSG00000119650.13"/>
</dbReference>
<dbReference type="GeneID" id="112752"/>
<dbReference type="KEGG" id="hsa:112752"/>
<dbReference type="MANE-Select" id="ENST00000314067.11">
    <property type="protein sequence ID" value="ENSP00000324177.6"/>
    <property type="RefSeq nucleotide sequence ID" value="NM_001102564.3"/>
    <property type="RefSeq protein sequence ID" value="NP_001096034.1"/>
</dbReference>
<dbReference type="UCSC" id="uc001xse.4">
    <molecule id="Q96FT9-1"/>
    <property type="organism name" value="human"/>
</dbReference>
<dbReference type="AGR" id="HGNC:29669"/>
<dbReference type="CTD" id="112752"/>
<dbReference type="DisGeNET" id="112752"/>
<dbReference type="GeneCards" id="IFT43"/>
<dbReference type="GeneReviews" id="IFT43"/>
<dbReference type="HGNC" id="HGNC:29669">
    <property type="gene designation" value="IFT43"/>
</dbReference>
<dbReference type="HPA" id="ENSG00000119650">
    <property type="expression patterns" value="Low tissue specificity"/>
</dbReference>
<dbReference type="MalaCards" id="IFT43"/>
<dbReference type="MIM" id="614068">
    <property type="type" value="gene"/>
</dbReference>
<dbReference type="MIM" id="614099">
    <property type="type" value="phenotype"/>
</dbReference>
<dbReference type="MIM" id="617866">
    <property type="type" value="phenotype"/>
</dbReference>
<dbReference type="MIM" id="617871">
    <property type="type" value="phenotype"/>
</dbReference>
<dbReference type="neXtProt" id="NX_Q96FT9"/>
<dbReference type="OpenTargets" id="ENSG00000119650"/>
<dbReference type="Orphanet" id="1515">
    <property type="disease" value="Cranioectodermal dysplasia"/>
</dbReference>
<dbReference type="PharmGKB" id="PA145149677"/>
<dbReference type="VEuPathDB" id="HostDB:ENSG00000119650"/>
<dbReference type="GeneTree" id="ENSGT00390000012060"/>
<dbReference type="HOGENOM" id="CLU_104337_0_0_1"/>
<dbReference type="InParanoid" id="Q96FT9"/>
<dbReference type="OMA" id="CLGNAEE"/>
<dbReference type="OrthoDB" id="206950at2759"/>
<dbReference type="PAN-GO" id="Q96FT9">
    <property type="GO annotations" value="3 GO annotations based on evolutionary models"/>
</dbReference>
<dbReference type="TreeFam" id="TF323566"/>
<dbReference type="PathwayCommons" id="Q96FT9"/>
<dbReference type="Reactome" id="R-HSA-5620924">
    <property type="pathway name" value="Intraflagellar transport"/>
</dbReference>
<dbReference type="SignaLink" id="Q96FT9"/>
<dbReference type="BioGRID-ORCS" id="112752">
    <property type="hits" value="14 hits in 1090 CRISPR screens"/>
</dbReference>
<dbReference type="ChiTaRS" id="IFT43">
    <property type="organism name" value="human"/>
</dbReference>
<dbReference type="GenomeRNAi" id="112752"/>
<dbReference type="Pharos" id="Q96FT9">
    <property type="development level" value="Tbio"/>
</dbReference>
<dbReference type="PRO" id="PR:Q96FT9"/>
<dbReference type="Proteomes" id="UP000005640">
    <property type="component" value="Chromosome 14"/>
</dbReference>
<dbReference type="RNAct" id="Q96FT9">
    <property type="molecule type" value="protein"/>
</dbReference>
<dbReference type="Bgee" id="ENSG00000119650">
    <property type="expression patterns" value="Expressed in right uterine tube and 174 other cell types or tissues"/>
</dbReference>
<dbReference type="ExpressionAtlas" id="Q96FT9">
    <property type="expression patterns" value="baseline and differential"/>
</dbReference>
<dbReference type="GO" id="GO:0034451">
    <property type="term" value="C:centriolar satellite"/>
    <property type="evidence" value="ECO:0000314"/>
    <property type="project" value="HPA"/>
</dbReference>
<dbReference type="GO" id="GO:0005814">
    <property type="term" value="C:centriole"/>
    <property type="evidence" value="ECO:0007669"/>
    <property type="project" value="Ensembl"/>
</dbReference>
<dbReference type="GO" id="GO:0036064">
    <property type="term" value="C:ciliary basal body"/>
    <property type="evidence" value="ECO:0000314"/>
    <property type="project" value="HPA"/>
</dbReference>
<dbReference type="GO" id="GO:0097542">
    <property type="term" value="C:ciliary tip"/>
    <property type="evidence" value="ECO:0000304"/>
    <property type="project" value="Reactome"/>
</dbReference>
<dbReference type="GO" id="GO:0005929">
    <property type="term" value="C:cilium"/>
    <property type="evidence" value="ECO:0000314"/>
    <property type="project" value="HPA"/>
</dbReference>
<dbReference type="GO" id="GO:0005737">
    <property type="term" value="C:cytoplasm"/>
    <property type="evidence" value="ECO:0007669"/>
    <property type="project" value="UniProtKB-KW"/>
</dbReference>
<dbReference type="GO" id="GO:0045171">
    <property type="term" value="C:intercellular bridge"/>
    <property type="evidence" value="ECO:0000314"/>
    <property type="project" value="HPA"/>
</dbReference>
<dbReference type="GO" id="GO:0030991">
    <property type="term" value="C:intraciliary transport particle A"/>
    <property type="evidence" value="ECO:0000314"/>
    <property type="project" value="UniProtKB"/>
</dbReference>
<dbReference type="GO" id="GO:0015630">
    <property type="term" value="C:microtubule cytoskeleton"/>
    <property type="evidence" value="ECO:0000314"/>
    <property type="project" value="HPA"/>
</dbReference>
<dbReference type="GO" id="GO:0072686">
    <property type="term" value="C:mitotic spindle"/>
    <property type="evidence" value="ECO:0000314"/>
    <property type="project" value="HPA"/>
</dbReference>
<dbReference type="GO" id="GO:0060271">
    <property type="term" value="P:cilium assembly"/>
    <property type="evidence" value="ECO:0000315"/>
    <property type="project" value="UniProtKB"/>
</dbReference>
<dbReference type="GO" id="GO:0035721">
    <property type="term" value="P:intraciliary retrograde transport"/>
    <property type="evidence" value="ECO:0000315"/>
    <property type="project" value="UniProtKB"/>
</dbReference>
<dbReference type="InterPro" id="IPR029302">
    <property type="entry name" value="IFT43"/>
</dbReference>
<dbReference type="PANTHER" id="PTHR33724">
    <property type="entry name" value="INTRAFLAGELLAR TRANSPORT PROTEIN 43 HOMOLOG"/>
    <property type="match status" value="1"/>
</dbReference>
<dbReference type="PANTHER" id="PTHR33724:SF1">
    <property type="entry name" value="INTRAFLAGELLAR TRANSPORT PROTEIN 43 HOMOLOG"/>
    <property type="match status" value="1"/>
</dbReference>
<dbReference type="Pfam" id="PF15305">
    <property type="entry name" value="IFT43"/>
    <property type="match status" value="1"/>
</dbReference>
<proteinExistence type="evidence at protein level"/>
<accession>Q96FT9</accession>
<accession>B3KPT6</accession>
<accession>B4DZI9</accession>
<accession>G3V385</accession>
<accession>O95418</accession>
<accession>Q9ULA9</accession>
<sequence length="208" mass="23529">MEDLLDLDEELRYSLATSRAKMGRRAQQESAQAENHLNGKNSSLTLTGETSSAKLPRCRQGGWAGDSVKASKFRRKASEEIEDFRLRPQSLNGSDYGGDIPIIPDLEEVQEEDFVLQVAAPPSIQIKRVMTYRDLDNDLMKYSAIQTLDGEIDLKLLTKVLAPEHEVREDDVGWDWDHLFTEVSSEVLTEWDPLQTEKEDPAGQARHT</sequence>
<comment type="function">
    <text evidence="4 7 8">As a component of IFT complex A (IFT-A), a complex required for retrograde ciliary transport and entry into cilia of G protein-coupled receptors (GPCRs), it is involved in ciliogenesis (PubMed:28400947, PubMed:28973684). Involved in retrograde ciliary transport along microtubules from the ciliary tip to the base (PubMed:21378380).</text>
</comment>
<comment type="subunit">
    <text evidence="2 3 6 9">Component of the IFT complex A (IFT-A) complex (PubMed:20889716, PubMed:27932497). IFT-A complex is divided into a core subcomplex composed of IFT122:IFT140:WDR19 which is associated with TULP3 and a peripheral subcomplex composed of IFT43:WDR35:TTC21B (PubMed:27932497). Interacts directy with IFT122, WDR35 and TTC21B (PubMed:19450523, PubMed:27932497, PubMed:29220510).</text>
</comment>
<comment type="interaction">
    <interactant intactId="EBI-10189681">
        <id>Q96FT9</id>
    </interactant>
    <interactant intactId="EBI-739696">
        <id>P25791</id>
        <label>LMO2</label>
    </interactant>
    <organismsDiffer>false</organismsDiffer>
    <experiments>3</experiments>
</comment>
<comment type="interaction">
    <interactant intactId="EBI-10189681">
        <id>Q96FT9</id>
    </interactant>
    <interactant intactId="EBI-766448">
        <id>Q9P2L0</id>
        <label>WDR35</label>
    </interactant>
    <organismsDiffer>false</organismsDiffer>
    <experiments>4</experiments>
</comment>
<comment type="interaction">
    <interactant intactId="EBI-10189681">
        <id>Q96FT9</id>
    </interactant>
    <interactant intactId="EBI-747061">
        <id>O75800</id>
        <label>ZMYND10</label>
    </interactant>
    <organismsDiffer>false</organismsDiffer>
    <experiments>3</experiments>
</comment>
<comment type="interaction">
    <interactant intactId="EBI-11944538">
        <id>Q96FT9-2</id>
    </interactant>
    <interactant intactId="EBI-399080">
        <id>Q92993</id>
        <label>KAT5</label>
    </interactant>
    <organismsDiffer>false</organismsDiffer>
    <experiments>3</experiments>
</comment>
<comment type="interaction">
    <interactant intactId="EBI-11944538">
        <id>Q96FT9-2</id>
    </interactant>
    <interactant intactId="EBI-11959475">
        <id>P25791-3</id>
        <label>LMO2</label>
    </interactant>
    <organismsDiffer>false</organismsDiffer>
    <experiments>3</experiments>
</comment>
<comment type="interaction">
    <interactant intactId="EBI-11944538">
        <id>Q96FT9-2</id>
    </interactant>
    <interactant intactId="EBI-11742507">
        <id>Q8TAP4-4</id>
        <label>LMO3</label>
    </interactant>
    <organismsDiffer>false</organismsDiffer>
    <experiments>3</experiments>
</comment>
<comment type="interaction">
    <interactant intactId="EBI-11944538">
        <id>Q96FT9-2</id>
    </interactant>
    <interactant intactId="EBI-1383528">
        <id>P17252</id>
        <label>PRKCA</label>
    </interactant>
    <organismsDiffer>false</organismsDiffer>
    <experiments>3</experiments>
</comment>
<comment type="interaction">
    <interactant intactId="EBI-11944538">
        <id>Q96FT9-2</id>
    </interactant>
    <interactant intactId="EBI-9090795">
        <id>Q15047-2</id>
        <label>SETDB1</label>
    </interactant>
    <organismsDiffer>false</organismsDiffer>
    <experiments>3</experiments>
</comment>
<comment type="interaction">
    <interactant intactId="EBI-11944538">
        <id>Q96FT9-2</id>
    </interactant>
    <interactant intactId="EBI-359832">
        <id>P61981</id>
        <label>YWHAG</label>
    </interactant>
    <organismsDiffer>false</organismsDiffer>
    <experiments>3</experiments>
</comment>
<comment type="interaction">
    <interactant intactId="EBI-11944538">
        <id>Q96FT9-2</id>
    </interactant>
    <interactant intactId="EBI-747061">
        <id>O75800</id>
        <label>ZMYND10</label>
    </interactant>
    <organismsDiffer>false</organismsDiffer>
    <experiments>3</experiments>
</comment>
<comment type="subcellular location">
    <subcellularLocation>
        <location evidence="5">Cytoplasm</location>
        <location evidence="5">Cytoskeleton</location>
    </subcellularLocation>
    <subcellularLocation>
        <location evidence="6 8">Cell projection</location>
        <location evidence="6 8">Cilium</location>
    </subcellularLocation>
    <text evidence="5 8">Associated with microtubules (PubMed:22361696). Localized at the distal tip of the cilium (PubMed:28973684).</text>
</comment>
<comment type="alternative products">
    <event type="alternative splicing"/>
    <isoform>
        <id>Q96FT9-1</id>
        <name>1</name>
        <sequence type="displayed"/>
    </isoform>
    <isoform>
        <id>Q96FT9-2</id>
        <name>2</name>
        <sequence type="described" ref="VSP_021169"/>
    </isoform>
    <isoform>
        <id>Q96FT9-3</id>
        <name>3</name>
        <sequence type="described" ref="VSP_041319"/>
    </isoform>
    <isoform>
        <id>Q96FT9-4</id>
        <name>4</name>
        <sequence type="described" ref="VSP_047398"/>
    </isoform>
</comment>
<comment type="tissue specificity">
    <text evidence="8">Expressed in the retina, predominantly in the photoreceptor outer segment.</text>
</comment>
<comment type="disease" evidence="4">
    <disease id="DI-03183">
        <name>Cranioectodermal dysplasia 3</name>
        <acronym>CED3</acronym>
        <description>A disorder primarily characterized by craniofacial, skeletal and ectodermal abnormalities. Clinical features include craniosynostosis, narrow rib cage, short limbs, brachydactyly, hypoplastic and widely spaced teeth, sparse hair, skin laxity and abnormal nails. Nephronophthisis leading to progressive renal failure, hepatic fibrosis, heart defects, and retinitis pigmentosa have also been described.</description>
        <dbReference type="MIM" id="614099"/>
    </disease>
    <text>The disease is caused by variants affecting the gene represented in this entry.</text>
</comment>
<comment type="disease" evidence="8">
    <disease id="DI-05187">
        <name>Retinitis pigmentosa 81</name>
        <acronym>RP81</acronym>
        <description>A form of retinitis pigmentosa, a retinal dystrophy belonging to the group of pigmentary retinopathies. Retinitis pigmentosa is characterized by retinal pigment deposits visible on fundus examination and primary loss of rod photoreceptor cells followed by secondary loss of cone photoreceptors. Patients typically have night vision blindness and loss of midperipheral visual field. As their condition progresses, they lose their far peripheral visual field and eventually central vision as well. RP81 inheritance is autosomal recessive.</description>
        <dbReference type="MIM" id="617871"/>
    </disease>
    <text>The disease is caused by variants affecting the gene represented in this entry.</text>
</comment>
<comment type="disease" evidence="7">
    <disease id="DI-05191">
        <name>Short-rib thoracic dysplasia 18 with polydactyly</name>
        <acronym>SRTD18</acronym>
        <description>A form of short-rib thoracic dysplasia, a group of autosomal recessive ciliopathies that are characterized by a constricted thoracic cage, short ribs, shortened tubular bones, and a 'trident' appearance of the acetabular roof. Polydactyly is variably present. Non-skeletal involvement can include cleft lip/palate as well as anomalies of major organs such as the brain, eye, heart, kidneys, liver, pancreas, intestines, and genitalia. Some forms of the disease are lethal in the neonatal period due to respiratory insufficiency secondary to a severely restricted thoracic cage, whereas others are compatible with life. Disease spectrum encompasses Ellis-van Creveld syndrome, asphyxiating thoracic dystrophy (Jeune syndrome), Mainzer-Saldino syndrome, and short rib-polydactyly syndrome.</description>
        <dbReference type="MIM" id="617866"/>
    </disease>
    <text>The disease is caused by variants affecting the gene represented in this entry.</text>
</comment>
<comment type="similarity">
    <text evidence="12">Belongs to the IFT43 family.</text>
</comment>
<reference key="1">
    <citation type="journal article" date="2004" name="Nat. Genet.">
        <title>Complete sequencing and characterization of 21,243 full-length human cDNAs.</title>
        <authorList>
            <person name="Ota T."/>
            <person name="Suzuki Y."/>
            <person name="Nishikawa T."/>
            <person name="Otsuki T."/>
            <person name="Sugiyama T."/>
            <person name="Irie R."/>
            <person name="Wakamatsu A."/>
            <person name="Hayashi K."/>
            <person name="Sato H."/>
            <person name="Nagai K."/>
            <person name="Kimura K."/>
            <person name="Makita H."/>
            <person name="Sekine M."/>
            <person name="Obayashi M."/>
            <person name="Nishi T."/>
            <person name="Shibahara T."/>
            <person name="Tanaka T."/>
            <person name="Ishii S."/>
            <person name="Yamamoto J."/>
            <person name="Saito K."/>
            <person name="Kawai Y."/>
            <person name="Isono Y."/>
            <person name="Nakamura Y."/>
            <person name="Nagahari K."/>
            <person name="Murakami K."/>
            <person name="Yasuda T."/>
            <person name="Iwayanagi T."/>
            <person name="Wagatsuma M."/>
            <person name="Shiratori A."/>
            <person name="Sudo H."/>
            <person name="Hosoiri T."/>
            <person name="Kaku Y."/>
            <person name="Kodaira H."/>
            <person name="Kondo H."/>
            <person name="Sugawara M."/>
            <person name="Takahashi M."/>
            <person name="Kanda K."/>
            <person name="Yokoi T."/>
            <person name="Furuya T."/>
            <person name="Kikkawa E."/>
            <person name="Omura Y."/>
            <person name="Abe K."/>
            <person name="Kamihara K."/>
            <person name="Katsuta N."/>
            <person name="Sato K."/>
            <person name="Tanikawa M."/>
            <person name="Yamazaki M."/>
            <person name="Ninomiya K."/>
            <person name="Ishibashi T."/>
            <person name="Yamashita H."/>
            <person name="Murakawa K."/>
            <person name="Fujimori K."/>
            <person name="Tanai H."/>
            <person name="Kimata M."/>
            <person name="Watanabe M."/>
            <person name="Hiraoka S."/>
            <person name="Chiba Y."/>
            <person name="Ishida S."/>
            <person name="Ono Y."/>
            <person name="Takiguchi S."/>
            <person name="Watanabe S."/>
            <person name="Yosida M."/>
            <person name="Hotuta T."/>
            <person name="Kusano J."/>
            <person name="Kanehori K."/>
            <person name="Takahashi-Fujii A."/>
            <person name="Hara H."/>
            <person name="Tanase T.-O."/>
            <person name="Nomura Y."/>
            <person name="Togiya S."/>
            <person name="Komai F."/>
            <person name="Hara R."/>
            <person name="Takeuchi K."/>
            <person name="Arita M."/>
            <person name="Imose N."/>
            <person name="Musashino K."/>
            <person name="Yuuki H."/>
            <person name="Oshima A."/>
            <person name="Sasaki N."/>
            <person name="Aotsuka S."/>
            <person name="Yoshikawa Y."/>
            <person name="Matsunawa H."/>
            <person name="Ichihara T."/>
            <person name="Shiohata N."/>
            <person name="Sano S."/>
            <person name="Moriya S."/>
            <person name="Momiyama H."/>
            <person name="Satoh N."/>
            <person name="Takami S."/>
            <person name="Terashima Y."/>
            <person name="Suzuki O."/>
            <person name="Nakagawa S."/>
            <person name="Senoh A."/>
            <person name="Mizoguchi H."/>
            <person name="Goto Y."/>
            <person name="Shimizu F."/>
            <person name="Wakebe H."/>
            <person name="Hishigaki H."/>
            <person name="Watanabe T."/>
            <person name="Sugiyama A."/>
            <person name="Takemoto M."/>
            <person name="Kawakami B."/>
            <person name="Yamazaki M."/>
            <person name="Watanabe K."/>
            <person name="Kumagai A."/>
            <person name="Itakura S."/>
            <person name="Fukuzumi Y."/>
            <person name="Fujimori Y."/>
            <person name="Komiyama M."/>
            <person name="Tashiro H."/>
            <person name="Tanigami A."/>
            <person name="Fujiwara T."/>
            <person name="Ono T."/>
            <person name="Yamada K."/>
            <person name="Fujii Y."/>
            <person name="Ozaki K."/>
            <person name="Hirao M."/>
            <person name="Ohmori Y."/>
            <person name="Kawabata A."/>
            <person name="Hikiji T."/>
            <person name="Kobatake N."/>
            <person name="Inagaki H."/>
            <person name="Ikema Y."/>
            <person name="Okamoto S."/>
            <person name="Okitani R."/>
            <person name="Kawakami T."/>
            <person name="Noguchi S."/>
            <person name="Itoh T."/>
            <person name="Shigeta K."/>
            <person name="Senba T."/>
            <person name="Matsumura K."/>
            <person name="Nakajima Y."/>
            <person name="Mizuno T."/>
            <person name="Morinaga M."/>
            <person name="Sasaki M."/>
            <person name="Togashi T."/>
            <person name="Oyama M."/>
            <person name="Hata H."/>
            <person name="Watanabe M."/>
            <person name="Komatsu T."/>
            <person name="Mizushima-Sugano J."/>
            <person name="Satoh T."/>
            <person name="Shirai Y."/>
            <person name="Takahashi Y."/>
            <person name="Nakagawa K."/>
            <person name="Okumura K."/>
            <person name="Nagase T."/>
            <person name="Nomura N."/>
            <person name="Kikuchi H."/>
            <person name="Masuho Y."/>
            <person name="Yamashita R."/>
            <person name="Nakai K."/>
            <person name="Yada T."/>
            <person name="Nakamura Y."/>
            <person name="Ohara O."/>
            <person name="Isogai T."/>
            <person name="Sugano S."/>
        </authorList>
    </citation>
    <scope>NUCLEOTIDE SEQUENCE [LARGE SCALE MRNA] (ISOFORMS 1 AND 3)</scope>
    <source>
        <tissue>Placenta</tissue>
        <tissue>Testis</tissue>
    </source>
</reference>
<reference key="2">
    <citation type="journal article" date="2003" name="Nature">
        <title>The DNA sequence and analysis of human chromosome 14.</title>
        <authorList>
            <person name="Heilig R."/>
            <person name="Eckenberg R."/>
            <person name="Petit J.-L."/>
            <person name="Fonknechten N."/>
            <person name="Da Silva C."/>
            <person name="Cattolico L."/>
            <person name="Levy M."/>
            <person name="Barbe V."/>
            <person name="De Berardinis V."/>
            <person name="Ureta-Vidal A."/>
            <person name="Pelletier E."/>
            <person name="Vico V."/>
            <person name="Anthouard V."/>
            <person name="Rowen L."/>
            <person name="Madan A."/>
            <person name="Qin S."/>
            <person name="Sun H."/>
            <person name="Du H."/>
            <person name="Pepin K."/>
            <person name="Artiguenave F."/>
            <person name="Robert C."/>
            <person name="Cruaud C."/>
            <person name="Bruels T."/>
            <person name="Jaillon O."/>
            <person name="Friedlander L."/>
            <person name="Samson G."/>
            <person name="Brottier P."/>
            <person name="Cure S."/>
            <person name="Segurens B."/>
            <person name="Aniere F."/>
            <person name="Samain S."/>
            <person name="Crespeau H."/>
            <person name="Abbasi N."/>
            <person name="Aiach N."/>
            <person name="Boscus D."/>
            <person name="Dickhoff R."/>
            <person name="Dors M."/>
            <person name="Dubois I."/>
            <person name="Friedman C."/>
            <person name="Gouyvenoux M."/>
            <person name="James R."/>
            <person name="Madan A."/>
            <person name="Mairey-Estrada B."/>
            <person name="Mangenot S."/>
            <person name="Martins N."/>
            <person name="Menard M."/>
            <person name="Oztas S."/>
            <person name="Ratcliffe A."/>
            <person name="Shaffer T."/>
            <person name="Trask B."/>
            <person name="Vacherie B."/>
            <person name="Bellemere C."/>
            <person name="Belser C."/>
            <person name="Besnard-Gonnet M."/>
            <person name="Bartol-Mavel D."/>
            <person name="Boutard M."/>
            <person name="Briez-Silla S."/>
            <person name="Combette S."/>
            <person name="Dufosse-Laurent V."/>
            <person name="Ferron C."/>
            <person name="Lechaplais C."/>
            <person name="Louesse C."/>
            <person name="Muselet D."/>
            <person name="Magdelenat G."/>
            <person name="Pateau E."/>
            <person name="Petit E."/>
            <person name="Sirvain-Trukniewicz P."/>
            <person name="Trybou A."/>
            <person name="Vega-Czarny N."/>
            <person name="Bataille E."/>
            <person name="Bluet E."/>
            <person name="Bordelais I."/>
            <person name="Dubois M."/>
            <person name="Dumont C."/>
            <person name="Guerin T."/>
            <person name="Haffray S."/>
            <person name="Hammadi R."/>
            <person name="Muanga J."/>
            <person name="Pellouin V."/>
            <person name="Robert D."/>
            <person name="Wunderle E."/>
            <person name="Gauguet G."/>
            <person name="Roy A."/>
            <person name="Sainte-Marthe L."/>
            <person name="Verdier J."/>
            <person name="Verdier-Discala C."/>
            <person name="Hillier L.W."/>
            <person name="Fulton L."/>
            <person name="McPherson J."/>
            <person name="Matsuda F."/>
            <person name="Wilson R."/>
            <person name="Scarpelli C."/>
            <person name="Gyapay G."/>
            <person name="Wincker P."/>
            <person name="Saurin W."/>
            <person name="Quetier F."/>
            <person name="Waterston R."/>
            <person name="Hood L."/>
            <person name="Weissenbach J."/>
        </authorList>
    </citation>
    <scope>NUCLEOTIDE SEQUENCE [LARGE SCALE GENOMIC DNA]</scope>
</reference>
<reference key="3">
    <citation type="journal article" date="2004" name="Genome Res.">
        <title>The status, quality, and expansion of the NIH full-length cDNA project: the Mammalian Gene Collection (MGC).</title>
        <authorList>
            <consortium name="The MGC Project Team"/>
        </authorList>
    </citation>
    <scope>NUCLEOTIDE SEQUENCE [LARGE SCALE MRNA] (ISOFORM 2)</scope>
    <source>
        <tissue>Uterus</tissue>
    </source>
</reference>
<reference key="4">
    <citation type="journal article" date="2009" name="Cell">
        <title>SnapShot: Intraflagellar transport.</title>
        <authorList>
            <person name="Cole D.G."/>
            <person name="Snell W.J."/>
        </authorList>
    </citation>
    <scope>INTERACTION WITH WDR35</scope>
</reference>
<reference key="5">
    <citation type="journal article" date="2010" name="Genes Dev.">
        <title>TULP3 bridges the IFT-A complex and membrane phosphoinositides to promote trafficking of G protein-coupled receptors into primary cilia.</title>
        <authorList>
            <person name="Mukhopadhyay S."/>
            <person name="Wen X."/>
            <person name="Chih B."/>
            <person name="Nelson C.D."/>
            <person name="Lane W.S."/>
            <person name="Scales S.J."/>
            <person name="Jackson P.K."/>
        </authorList>
    </citation>
    <scope>IDENTIFICATION IN THE IFT-A COMPLEX</scope>
</reference>
<reference key="6">
    <citation type="journal article" date="2010" name="Sci. Signal.">
        <title>Quantitative phosphoproteomics reveals widespread full phosphorylation site occupancy during mitosis.</title>
        <authorList>
            <person name="Olsen J.V."/>
            <person name="Vermeulen M."/>
            <person name="Santamaria A."/>
            <person name="Kumar C."/>
            <person name="Miller M.L."/>
            <person name="Jensen L.J."/>
            <person name="Gnad F."/>
            <person name="Cox J."/>
            <person name="Jensen T.S."/>
            <person name="Nigg E.A."/>
            <person name="Brunak S."/>
            <person name="Mann M."/>
        </authorList>
    </citation>
    <scope>PHOSPHORYLATION [LARGE SCALE ANALYSIS] AT SER-78</scope>
    <scope>IDENTIFICATION BY MASS SPECTROMETRY [LARGE SCALE ANALYSIS]</scope>
    <source>
        <tissue>Cervix carcinoma</tissue>
    </source>
</reference>
<reference key="7">
    <citation type="journal article" date="2011" name="J. Med. Genet.">
        <title>C14ORF179 encoding IFT43 is mutated in Sensenbrenner syndrome.</title>
        <authorList>
            <person name="Arts H.H."/>
            <person name="Bongers E.M."/>
            <person name="Mans D.A."/>
            <person name="van Beersum S.E."/>
            <person name="Oud M.M."/>
            <person name="Bolat E."/>
            <person name="Spruijt L."/>
            <person name="Cornelissen E.A."/>
            <person name="Schuurs-Hoeijmakers J.H."/>
            <person name="de Leeuw N."/>
            <person name="Cormier-Daire V."/>
            <person name="Brunner H.G."/>
            <person name="Knoers N.V."/>
            <person name="Roepman R."/>
        </authorList>
    </citation>
    <scope>FUNCTION</scope>
    <scope>INVOLVEMENT IN CED3</scope>
</reference>
<reference key="8">
    <citation type="journal article" date="2012" name="J. Proteomics">
        <title>Systematic validation of antibody binding and protein subcellular localization using siRNA and confocal microscopy.</title>
        <authorList>
            <person name="Stadler C."/>
            <person name="Hjelmare M."/>
            <person name="Neumann B."/>
            <person name="Jonasson K."/>
            <person name="Pepperkok R."/>
            <person name="Uhlen M."/>
            <person name="Lundberg E."/>
        </authorList>
    </citation>
    <scope>SUBCELLULAR LOCATION</scope>
</reference>
<reference key="9">
    <citation type="journal article" date="2012" name="Proc. Natl. Acad. Sci. U.S.A.">
        <title>N-terminal acetylome analyses and functional insights of the N-terminal acetyltransferase NatB.</title>
        <authorList>
            <person name="Van Damme P."/>
            <person name="Lasa M."/>
            <person name="Polevoda B."/>
            <person name="Gazquez C."/>
            <person name="Elosegui-Artola A."/>
            <person name="Kim D.S."/>
            <person name="De Juan-Pardo E."/>
            <person name="Demeyer K."/>
            <person name="Hole K."/>
            <person name="Larrea E."/>
            <person name="Timmerman E."/>
            <person name="Prieto J."/>
            <person name="Arnesen T."/>
            <person name="Sherman F."/>
            <person name="Gevaert K."/>
            <person name="Aldabe R."/>
        </authorList>
    </citation>
    <scope>ACETYLATION [LARGE SCALE ANALYSIS] AT MET-1</scope>
    <scope>IDENTIFICATION BY MASS SPECTROMETRY [LARGE SCALE ANALYSIS]</scope>
</reference>
<reference key="10">
    <citation type="journal article" date="2013" name="J. Proteome Res.">
        <title>Toward a comprehensive characterization of a human cancer cell phosphoproteome.</title>
        <authorList>
            <person name="Zhou H."/>
            <person name="Di Palma S."/>
            <person name="Preisinger C."/>
            <person name="Peng M."/>
            <person name="Polat A.N."/>
            <person name="Heck A.J."/>
            <person name="Mohammed S."/>
        </authorList>
    </citation>
    <scope>PHOSPHORYLATION [LARGE SCALE ANALYSIS] AT SER-78</scope>
    <scope>IDENTIFICATION BY MASS SPECTROMETRY [LARGE SCALE ANALYSIS]</scope>
    <source>
        <tissue>Cervix carcinoma</tissue>
        <tissue>Erythroleukemia</tissue>
    </source>
</reference>
<reference key="11">
    <citation type="journal article" date="2017" name="Mol. Biol. Cell">
        <title>Intraflagellar transport-A complex mediates ciliary entry and retrograde trafficking of ciliary G protein-coupled receptors.</title>
        <authorList>
            <person name="Hirano T."/>
            <person name="Katoh Y."/>
            <person name="Nakayama K."/>
        </authorList>
    </citation>
    <scope>IDENTIFICATION IN THE IFT-A COMPLEX</scope>
    <scope>SUBCELLULAR LOCATION</scope>
</reference>
<reference key="12">
    <citation type="journal article" date="2018" name="Hum. Mol. Genet.">
        <title>Ciliopathy-associated mutations of IFT122 impair ciliary protein trafficking but not ciliogenesis.</title>
        <authorList>
            <person name="Takahara M."/>
            <person name="Katoh Y."/>
            <person name="Nakamura K."/>
            <person name="Hirano T."/>
            <person name="Sugawa M."/>
            <person name="Tsurumi Y."/>
            <person name="Nakayama K."/>
        </authorList>
    </citation>
    <scope>IDENTIFICATION IN THE IFT-A COMPLEX</scope>
</reference>
<reference key="13">
    <citation type="journal article" date="2017" name="Cilia">
        <title>Mutations in IFT-A satellite core component genes IFT43 and IFT121 produce short rib polydactyly syndrome with distinctive campomelia.</title>
        <authorList>
            <person name="Duran I."/>
            <person name="Taylor S.P."/>
            <person name="Zhang W."/>
            <person name="Martin J."/>
            <person name="Qureshi F."/>
            <person name="Jacques S.M."/>
            <person name="Wallerstein R."/>
            <person name="Lachman R.S."/>
            <person name="Nickerson D.A."/>
            <person name="Bamshad M."/>
            <person name="Cohn D.H."/>
            <person name="Krakow D."/>
        </authorList>
    </citation>
    <scope>FUNCTION</scope>
    <scope>INVOLVEMENT IN SRTD18</scope>
    <scope>VARIANT SRTD18 ARG-174</scope>
    <scope>CHARACTERIZATION OF VARIANT SRTD18 ARG-174</scope>
</reference>
<reference key="14">
    <citation type="journal article" date="2017" name="Hum. Mol. Genet.">
        <title>A mutation in IFT43 causes non-syndromic recessive retinal degeneration.</title>
        <authorList>
            <person name="Biswas P."/>
            <person name="Duncan J.L."/>
            <person name="Ali M."/>
            <person name="Matsui H."/>
            <person name="Naeem M.A."/>
            <person name="Raghavendra P.B."/>
            <person name="Frazer K.A."/>
            <person name="Arts H.H."/>
            <person name="Riazuddin S."/>
            <person name="Akram J."/>
            <person name="Hejtmancik J.F."/>
            <person name="Riazuddin S.A."/>
            <person name="Ayyagari R."/>
        </authorList>
    </citation>
    <scope>INVOLVEMENT IN RP81</scope>
    <scope>FUNCTION</scope>
    <scope>TISSUE SPECIFICITY</scope>
    <scope>SUBCELLULAR LOCATION</scope>
    <scope>VARIANT RP81 LYS-34</scope>
    <scope>CHARACTERIZATION OF VARIANT RP81 LYS-34</scope>
</reference>
<organism>
    <name type="scientific">Homo sapiens</name>
    <name type="common">Human</name>
    <dbReference type="NCBI Taxonomy" id="9606"/>
    <lineage>
        <taxon>Eukaryota</taxon>
        <taxon>Metazoa</taxon>
        <taxon>Chordata</taxon>
        <taxon>Craniata</taxon>
        <taxon>Vertebrata</taxon>
        <taxon>Euteleostomi</taxon>
        <taxon>Mammalia</taxon>
        <taxon>Eutheria</taxon>
        <taxon>Euarchontoglires</taxon>
        <taxon>Primates</taxon>
        <taxon>Haplorrhini</taxon>
        <taxon>Catarrhini</taxon>
        <taxon>Hominidae</taxon>
        <taxon>Homo</taxon>
    </lineage>
</organism>
<protein>
    <recommendedName>
        <fullName evidence="12">Intraflagellar transport protein 43 homolog</fullName>
    </recommendedName>
</protein>
<gene>
    <name evidence="13" type="primary">IFT43</name>
    <name type="synonym">C14orf179</name>
</gene>